<keyword id="KW-0067">ATP-binding</keyword>
<keyword id="KW-0963">Cytoplasm</keyword>
<keyword id="KW-0418">Kinase</keyword>
<keyword id="KW-0547">Nucleotide-binding</keyword>
<keyword id="KW-1185">Reference proteome</keyword>
<keyword id="KW-0808">Transferase</keyword>
<protein>
    <recommendedName>
        <fullName evidence="1">Cytidylate kinase</fullName>
        <shortName evidence="1">CK</shortName>
        <ecNumber evidence="1">2.7.4.25</ecNumber>
    </recommendedName>
    <alternativeName>
        <fullName evidence="1">Cytidine monophosphate kinase</fullName>
        <shortName evidence="1">CMP kinase</shortName>
    </alternativeName>
</protein>
<gene>
    <name evidence="1" type="primary">cmk</name>
    <name type="ordered locus">BPSL2516</name>
</gene>
<organism>
    <name type="scientific">Burkholderia pseudomallei (strain K96243)</name>
    <dbReference type="NCBI Taxonomy" id="272560"/>
    <lineage>
        <taxon>Bacteria</taxon>
        <taxon>Pseudomonadati</taxon>
        <taxon>Pseudomonadota</taxon>
        <taxon>Betaproteobacteria</taxon>
        <taxon>Burkholderiales</taxon>
        <taxon>Burkholderiaceae</taxon>
        <taxon>Burkholderia</taxon>
        <taxon>pseudomallei group</taxon>
    </lineage>
</organism>
<feature type="chain" id="PRO_0000131895" description="Cytidylate kinase">
    <location>
        <begin position="1"/>
        <end position="228"/>
    </location>
</feature>
<feature type="binding site" evidence="1">
    <location>
        <begin position="17"/>
        <end position="25"/>
    </location>
    <ligand>
        <name>ATP</name>
        <dbReference type="ChEBI" id="CHEBI:30616"/>
    </ligand>
</feature>
<proteinExistence type="inferred from homology"/>
<sequence>MKSTRPFHPTPVITIDGPTASGKGTVAALVAAHLGFHLLDSGALYRLAALASIRYQVEPDDADALASLVDGLHITFREGCAQLDGVDVSDEIRAEAVGNRASAIAVHASVRAALVARQRAFRKTPGLVADGRDMGTVIFPDAVLKVFLTASVEARAARRHKQLMQKGFSANMDNLLQDLRERDARDSNRAAAPLKPAADAKPLDTSALTIEQSVEQVLAWYRELGQPA</sequence>
<reference key="1">
    <citation type="journal article" date="2004" name="Proc. Natl. Acad. Sci. U.S.A.">
        <title>Genomic plasticity of the causative agent of melioidosis, Burkholderia pseudomallei.</title>
        <authorList>
            <person name="Holden M.T.G."/>
            <person name="Titball R.W."/>
            <person name="Peacock S.J."/>
            <person name="Cerdeno-Tarraga A.-M."/>
            <person name="Atkins T."/>
            <person name="Crossman L.C."/>
            <person name="Pitt T."/>
            <person name="Churcher C."/>
            <person name="Mungall K.L."/>
            <person name="Bentley S.D."/>
            <person name="Sebaihia M."/>
            <person name="Thomson N.R."/>
            <person name="Bason N."/>
            <person name="Beacham I.R."/>
            <person name="Brooks K."/>
            <person name="Brown K.A."/>
            <person name="Brown N.F."/>
            <person name="Challis G.L."/>
            <person name="Cherevach I."/>
            <person name="Chillingworth T."/>
            <person name="Cronin A."/>
            <person name="Crossett B."/>
            <person name="Davis P."/>
            <person name="DeShazer D."/>
            <person name="Feltwell T."/>
            <person name="Fraser A."/>
            <person name="Hance Z."/>
            <person name="Hauser H."/>
            <person name="Holroyd S."/>
            <person name="Jagels K."/>
            <person name="Keith K.E."/>
            <person name="Maddison M."/>
            <person name="Moule S."/>
            <person name="Price C."/>
            <person name="Quail M.A."/>
            <person name="Rabbinowitsch E."/>
            <person name="Rutherford K."/>
            <person name="Sanders M."/>
            <person name="Simmonds M."/>
            <person name="Songsivilai S."/>
            <person name="Stevens K."/>
            <person name="Tumapa S."/>
            <person name="Vesaratchavest M."/>
            <person name="Whitehead S."/>
            <person name="Yeats C."/>
            <person name="Barrell B.G."/>
            <person name="Oyston P.C.F."/>
            <person name="Parkhill J."/>
        </authorList>
    </citation>
    <scope>NUCLEOTIDE SEQUENCE [LARGE SCALE GENOMIC DNA]</scope>
    <source>
        <strain>K96243</strain>
    </source>
</reference>
<evidence type="ECO:0000255" key="1">
    <source>
        <dbReference type="HAMAP-Rule" id="MF_00238"/>
    </source>
</evidence>
<evidence type="ECO:0000305" key="2"/>
<dbReference type="EC" id="2.7.4.25" evidence="1"/>
<dbReference type="EMBL" id="BX571965">
    <property type="protein sequence ID" value="CAH36523.1"/>
    <property type="status" value="ALT_INIT"/>
    <property type="molecule type" value="Genomic_DNA"/>
</dbReference>
<dbReference type="RefSeq" id="WP_004532324.1">
    <property type="nucleotide sequence ID" value="NZ_CP009538.1"/>
</dbReference>
<dbReference type="RefSeq" id="YP_109112.1">
    <property type="nucleotide sequence ID" value="NC_006350.1"/>
</dbReference>
<dbReference type="SMR" id="Q63S05"/>
<dbReference type="STRING" id="272560.BPSL2516"/>
<dbReference type="GeneID" id="93061103"/>
<dbReference type="KEGG" id="bps:BPSL2516"/>
<dbReference type="PATRIC" id="fig|272560.51.peg.2865"/>
<dbReference type="eggNOG" id="COG0283">
    <property type="taxonomic scope" value="Bacteria"/>
</dbReference>
<dbReference type="Proteomes" id="UP000000605">
    <property type="component" value="Chromosome 1"/>
</dbReference>
<dbReference type="GO" id="GO:0005829">
    <property type="term" value="C:cytosol"/>
    <property type="evidence" value="ECO:0007669"/>
    <property type="project" value="TreeGrafter"/>
</dbReference>
<dbReference type="GO" id="GO:0005524">
    <property type="term" value="F:ATP binding"/>
    <property type="evidence" value="ECO:0007669"/>
    <property type="project" value="UniProtKB-UniRule"/>
</dbReference>
<dbReference type="GO" id="GO:0036430">
    <property type="term" value="F:CMP kinase activity"/>
    <property type="evidence" value="ECO:0007669"/>
    <property type="project" value="RHEA"/>
</dbReference>
<dbReference type="GO" id="GO:0036431">
    <property type="term" value="F:dCMP kinase activity"/>
    <property type="evidence" value="ECO:0007669"/>
    <property type="project" value="RHEA"/>
</dbReference>
<dbReference type="GO" id="GO:0015949">
    <property type="term" value="P:nucleobase-containing small molecule interconversion"/>
    <property type="evidence" value="ECO:0007669"/>
    <property type="project" value="TreeGrafter"/>
</dbReference>
<dbReference type="GO" id="GO:0006220">
    <property type="term" value="P:pyrimidine nucleotide metabolic process"/>
    <property type="evidence" value="ECO:0007669"/>
    <property type="project" value="UniProtKB-UniRule"/>
</dbReference>
<dbReference type="CDD" id="cd02020">
    <property type="entry name" value="CMPK"/>
    <property type="match status" value="1"/>
</dbReference>
<dbReference type="Gene3D" id="3.40.50.300">
    <property type="entry name" value="P-loop containing nucleotide triphosphate hydrolases"/>
    <property type="match status" value="1"/>
</dbReference>
<dbReference type="HAMAP" id="MF_00238">
    <property type="entry name" value="Cytidyl_kinase_type1"/>
    <property type="match status" value="1"/>
</dbReference>
<dbReference type="InterPro" id="IPR003136">
    <property type="entry name" value="Cytidylate_kin"/>
</dbReference>
<dbReference type="InterPro" id="IPR011994">
    <property type="entry name" value="Cytidylate_kinase_dom"/>
</dbReference>
<dbReference type="InterPro" id="IPR027417">
    <property type="entry name" value="P-loop_NTPase"/>
</dbReference>
<dbReference type="NCBIfam" id="TIGR00017">
    <property type="entry name" value="cmk"/>
    <property type="match status" value="1"/>
</dbReference>
<dbReference type="PANTHER" id="PTHR21299:SF2">
    <property type="entry name" value="CYTIDYLATE KINASE"/>
    <property type="match status" value="1"/>
</dbReference>
<dbReference type="PANTHER" id="PTHR21299">
    <property type="entry name" value="CYTIDYLATE KINASE/PANTOATE-BETA-ALANINE LIGASE"/>
    <property type="match status" value="1"/>
</dbReference>
<dbReference type="Pfam" id="PF02224">
    <property type="entry name" value="Cytidylate_kin"/>
    <property type="match status" value="1"/>
</dbReference>
<dbReference type="SUPFAM" id="SSF52540">
    <property type="entry name" value="P-loop containing nucleoside triphosphate hydrolases"/>
    <property type="match status" value="1"/>
</dbReference>
<name>KCY_BURPS</name>
<accession>Q63S05</accession>
<comment type="catalytic activity">
    <reaction evidence="1">
        <text>CMP + ATP = CDP + ADP</text>
        <dbReference type="Rhea" id="RHEA:11600"/>
        <dbReference type="ChEBI" id="CHEBI:30616"/>
        <dbReference type="ChEBI" id="CHEBI:58069"/>
        <dbReference type="ChEBI" id="CHEBI:60377"/>
        <dbReference type="ChEBI" id="CHEBI:456216"/>
        <dbReference type="EC" id="2.7.4.25"/>
    </reaction>
</comment>
<comment type="catalytic activity">
    <reaction evidence="1">
        <text>dCMP + ATP = dCDP + ADP</text>
        <dbReference type="Rhea" id="RHEA:25094"/>
        <dbReference type="ChEBI" id="CHEBI:30616"/>
        <dbReference type="ChEBI" id="CHEBI:57566"/>
        <dbReference type="ChEBI" id="CHEBI:58593"/>
        <dbReference type="ChEBI" id="CHEBI:456216"/>
        <dbReference type="EC" id="2.7.4.25"/>
    </reaction>
</comment>
<comment type="subcellular location">
    <subcellularLocation>
        <location evidence="1">Cytoplasm</location>
    </subcellularLocation>
</comment>
<comment type="similarity">
    <text evidence="1">Belongs to the cytidylate kinase family. Type 1 subfamily.</text>
</comment>
<comment type="sequence caution" evidence="2">
    <conflict type="erroneous initiation">
        <sequence resource="EMBL-CDS" id="CAH36523"/>
    </conflict>
</comment>